<keyword id="KW-0927">Auxin signaling pathway</keyword>
<keyword id="KW-0238">DNA-binding</keyword>
<keyword id="KW-0539">Nucleus</keyword>
<keyword id="KW-1185">Reference proteome</keyword>
<keyword id="KW-0804">Transcription</keyword>
<keyword id="KW-0805">Transcription regulation</keyword>
<protein>
    <recommendedName>
        <fullName>Auxin response factor 18</fullName>
    </recommendedName>
</protein>
<dbReference type="EMBL" id="AL132959">
    <property type="protein sequence ID" value="CAB71113.1"/>
    <property type="status" value="ALT_SEQ"/>
    <property type="molecule type" value="Genomic_DNA"/>
</dbReference>
<dbReference type="EMBL" id="CP002686">
    <property type="protein sequence ID" value="AEE80264.1"/>
    <property type="molecule type" value="Genomic_DNA"/>
</dbReference>
<dbReference type="EMBL" id="AF334717">
    <property type="protein sequence ID" value="AAG50095.1"/>
    <property type="molecule type" value="mRNA"/>
</dbReference>
<dbReference type="EMBL" id="AY059746">
    <property type="protein sequence ID" value="AAL24094.1"/>
    <property type="molecule type" value="mRNA"/>
</dbReference>
<dbReference type="EMBL" id="AY070463">
    <property type="protein sequence ID" value="AAL49929.1"/>
    <property type="molecule type" value="mRNA"/>
</dbReference>
<dbReference type="EMBL" id="AY091392">
    <property type="protein sequence ID" value="AAM14331.1"/>
    <property type="molecule type" value="mRNA"/>
</dbReference>
<dbReference type="EMBL" id="AK229945">
    <property type="protein sequence ID" value="BAF01771.1"/>
    <property type="molecule type" value="mRNA"/>
</dbReference>
<dbReference type="PIR" id="T47975">
    <property type="entry name" value="T47975"/>
</dbReference>
<dbReference type="RefSeq" id="NP_567119.1">
    <property type="nucleotide sequence ID" value="NM_116048.3"/>
</dbReference>
<dbReference type="SMR" id="Q9C5W9"/>
<dbReference type="BioGRID" id="10670">
    <property type="interactions" value="38"/>
</dbReference>
<dbReference type="FunCoup" id="Q9C5W9">
    <property type="interactions" value="290"/>
</dbReference>
<dbReference type="IntAct" id="Q9C5W9">
    <property type="interactions" value="31"/>
</dbReference>
<dbReference type="STRING" id="3702.Q9C5W9"/>
<dbReference type="GlyGen" id="Q9C5W9">
    <property type="glycosylation" value="1 site"/>
</dbReference>
<dbReference type="iPTMnet" id="Q9C5W9"/>
<dbReference type="PaxDb" id="3702-AT3G61830.1"/>
<dbReference type="ProteomicsDB" id="241026"/>
<dbReference type="DNASU" id="825356"/>
<dbReference type="EnsemblPlants" id="AT3G61830.1">
    <property type="protein sequence ID" value="AT3G61830.1"/>
    <property type="gene ID" value="AT3G61830"/>
</dbReference>
<dbReference type="GeneID" id="825356"/>
<dbReference type="Gramene" id="AT3G61830.1">
    <property type="protein sequence ID" value="AT3G61830.1"/>
    <property type="gene ID" value="AT3G61830"/>
</dbReference>
<dbReference type="KEGG" id="ath:AT3G61830"/>
<dbReference type="Araport" id="AT3G61830"/>
<dbReference type="TAIR" id="AT3G61830">
    <property type="gene designation" value="ARF18"/>
</dbReference>
<dbReference type="eggNOG" id="ENOG502QTME">
    <property type="taxonomic scope" value="Eukaryota"/>
</dbReference>
<dbReference type="HOGENOM" id="CLU_002626_4_4_1"/>
<dbReference type="InParanoid" id="Q9C5W9"/>
<dbReference type="OMA" id="PRDKWEV"/>
<dbReference type="PhylomeDB" id="Q9C5W9"/>
<dbReference type="PRO" id="PR:Q9C5W9"/>
<dbReference type="Proteomes" id="UP000006548">
    <property type="component" value="Chromosome 3"/>
</dbReference>
<dbReference type="ExpressionAtlas" id="Q9C5W9">
    <property type="expression patterns" value="baseline and differential"/>
</dbReference>
<dbReference type="GO" id="GO:0005634">
    <property type="term" value="C:nucleus"/>
    <property type="evidence" value="ECO:0007669"/>
    <property type="project" value="UniProtKB-SubCell"/>
</dbReference>
<dbReference type="GO" id="GO:0003700">
    <property type="term" value="F:DNA-binding transcription factor activity"/>
    <property type="evidence" value="ECO:0000250"/>
    <property type="project" value="TAIR"/>
</dbReference>
<dbReference type="GO" id="GO:0042802">
    <property type="term" value="F:identical protein binding"/>
    <property type="evidence" value="ECO:0000353"/>
    <property type="project" value="IntAct"/>
</dbReference>
<dbReference type="GO" id="GO:0000976">
    <property type="term" value="F:transcription cis-regulatory region binding"/>
    <property type="evidence" value="ECO:0000353"/>
    <property type="project" value="TAIR"/>
</dbReference>
<dbReference type="GO" id="GO:0009734">
    <property type="term" value="P:auxin-activated signaling pathway"/>
    <property type="evidence" value="ECO:0007669"/>
    <property type="project" value="UniProtKB-KW"/>
</dbReference>
<dbReference type="CDD" id="cd10017">
    <property type="entry name" value="B3_DNA"/>
    <property type="match status" value="1"/>
</dbReference>
<dbReference type="FunFam" id="2.30.30.1040:FF:000001">
    <property type="entry name" value="Auxin response factor"/>
    <property type="match status" value="1"/>
</dbReference>
<dbReference type="FunFam" id="2.40.330.10:FF:000001">
    <property type="entry name" value="Auxin response factor"/>
    <property type="match status" value="1"/>
</dbReference>
<dbReference type="FunFam" id="3.10.20.90:FF:000047">
    <property type="entry name" value="Auxin response factor"/>
    <property type="match status" value="1"/>
</dbReference>
<dbReference type="Gene3D" id="2.30.30.1040">
    <property type="match status" value="1"/>
</dbReference>
<dbReference type="Gene3D" id="2.40.330.10">
    <property type="entry name" value="DNA-binding pseudobarrel domain"/>
    <property type="match status" value="1"/>
</dbReference>
<dbReference type="Gene3D" id="3.10.20.90">
    <property type="entry name" value="Phosphatidylinositol 3-kinase Catalytic Subunit, Chain A, domain 1"/>
    <property type="match status" value="1"/>
</dbReference>
<dbReference type="InterPro" id="IPR010525">
    <property type="entry name" value="ARF_dom"/>
</dbReference>
<dbReference type="InterPro" id="IPR044835">
    <property type="entry name" value="ARF_plant"/>
</dbReference>
<dbReference type="InterPro" id="IPR033389">
    <property type="entry name" value="AUX/IAA_dom"/>
</dbReference>
<dbReference type="InterPro" id="IPR003340">
    <property type="entry name" value="B3_DNA-bd"/>
</dbReference>
<dbReference type="InterPro" id="IPR015300">
    <property type="entry name" value="DNA-bd_pseudobarrel_sf"/>
</dbReference>
<dbReference type="InterPro" id="IPR053793">
    <property type="entry name" value="PB1-like"/>
</dbReference>
<dbReference type="PANTHER" id="PTHR31384:SF81">
    <property type="entry name" value="AUXIN RESPONSE FACTOR 18"/>
    <property type="match status" value="1"/>
</dbReference>
<dbReference type="PANTHER" id="PTHR31384">
    <property type="entry name" value="AUXIN RESPONSE FACTOR 4-RELATED"/>
    <property type="match status" value="1"/>
</dbReference>
<dbReference type="Pfam" id="PF06507">
    <property type="entry name" value="ARF_AD"/>
    <property type="match status" value="1"/>
</dbReference>
<dbReference type="Pfam" id="PF02309">
    <property type="entry name" value="AUX_IAA"/>
    <property type="match status" value="1"/>
</dbReference>
<dbReference type="Pfam" id="PF02362">
    <property type="entry name" value="B3"/>
    <property type="match status" value="1"/>
</dbReference>
<dbReference type="SMART" id="SM01019">
    <property type="entry name" value="B3"/>
    <property type="match status" value="1"/>
</dbReference>
<dbReference type="SUPFAM" id="SSF54277">
    <property type="entry name" value="CAD &amp; PB1 domains"/>
    <property type="match status" value="1"/>
</dbReference>
<dbReference type="SUPFAM" id="SSF101936">
    <property type="entry name" value="DNA-binding pseudobarrel domain"/>
    <property type="match status" value="1"/>
</dbReference>
<dbReference type="PROSITE" id="PS50863">
    <property type="entry name" value="B3"/>
    <property type="match status" value="1"/>
</dbReference>
<dbReference type="PROSITE" id="PS51745">
    <property type="entry name" value="PB1"/>
    <property type="match status" value="1"/>
</dbReference>
<name>ARFR_ARATH</name>
<reference key="1">
    <citation type="journal article" date="2000" name="Nature">
        <title>Sequence and analysis of chromosome 3 of the plant Arabidopsis thaliana.</title>
        <authorList>
            <person name="Salanoubat M."/>
            <person name="Lemcke K."/>
            <person name="Rieger M."/>
            <person name="Ansorge W."/>
            <person name="Unseld M."/>
            <person name="Fartmann B."/>
            <person name="Valle G."/>
            <person name="Bloecker H."/>
            <person name="Perez-Alonso M."/>
            <person name="Obermaier B."/>
            <person name="Delseny M."/>
            <person name="Boutry M."/>
            <person name="Grivell L.A."/>
            <person name="Mache R."/>
            <person name="Puigdomenech P."/>
            <person name="De Simone V."/>
            <person name="Choisne N."/>
            <person name="Artiguenave F."/>
            <person name="Robert C."/>
            <person name="Brottier P."/>
            <person name="Wincker P."/>
            <person name="Cattolico L."/>
            <person name="Weissenbach J."/>
            <person name="Saurin W."/>
            <person name="Quetier F."/>
            <person name="Schaefer M."/>
            <person name="Mueller-Auer S."/>
            <person name="Gabel C."/>
            <person name="Fuchs M."/>
            <person name="Benes V."/>
            <person name="Wurmbach E."/>
            <person name="Drzonek H."/>
            <person name="Erfle H."/>
            <person name="Jordan N."/>
            <person name="Bangert S."/>
            <person name="Wiedelmann R."/>
            <person name="Kranz H."/>
            <person name="Voss H."/>
            <person name="Holland R."/>
            <person name="Brandt P."/>
            <person name="Nyakatura G."/>
            <person name="Vezzi A."/>
            <person name="D'Angelo M."/>
            <person name="Pallavicini A."/>
            <person name="Toppo S."/>
            <person name="Simionati B."/>
            <person name="Conrad A."/>
            <person name="Hornischer K."/>
            <person name="Kauer G."/>
            <person name="Loehnert T.-H."/>
            <person name="Nordsiek G."/>
            <person name="Reichelt J."/>
            <person name="Scharfe M."/>
            <person name="Schoen O."/>
            <person name="Bargues M."/>
            <person name="Terol J."/>
            <person name="Climent J."/>
            <person name="Navarro P."/>
            <person name="Collado C."/>
            <person name="Perez-Perez A."/>
            <person name="Ottenwaelder B."/>
            <person name="Duchemin D."/>
            <person name="Cooke R."/>
            <person name="Laudie M."/>
            <person name="Berger-Llauro C."/>
            <person name="Purnelle B."/>
            <person name="Masuy D."/>
            <person name="de Haan M."/>
            <person name="Maarse A.C."/>
            <person name="Alcaraz J.-P."/>
            <person name="Cottet A."/>
            <person name="Casacuberta E."/>
            <person name="Monfort A."/>
            <person name="Argiriou A."/>
            <person name="Flores M."/>
            <person name="Liguori R."/>
            <person name="Vitale D."/>
            <person name="Mannhaupt G."/>
            <person name="Haase D."/>
            <person name="Schoof H."/>
            <person name="Rudd S."/>
            <person name="Zaccaria P."/>
            <person name="Mewes H.-W."/>
            <person name="Mayer K.F.X."/>
            <person name="Kaul S."/>
            <person name="Town C.D."/>
            <person name="Koo H.L."/>
            <person name="Tallon L.J."/>
            <person name="Jenkins J."/>
            <person name="Rooney T."/>
            <person name="Rizzo M."/>
            <person name="Walts A."/>
            <person name="Utterback T."/>
            <person name="Fujii C.Y."/>
            <person name="Shea T.P."/>
            <person name="Creasy T.H."/>
            <person name="Haas B."/>
            <person name="Maiti R."/>
            <person name="Wu D."/>
            <person name="Peterson J."/>
            <person name="Van Aken S."/>
            <person name="Pai G."/>
            <person name="Militscher J."/>
            <person name="Sellers P."/>
            <person name="Gill J.E."/>
            <person name="Feldblyum T.V."/>
            <person name="Preuss D."/>
            <person name="Lin X."/>
            <person name="Nierman W.C."/>
            <person name="Salzberg S.L."/>
            <person name="White O."/>
            <person name="Venter J.C."/>
            <person name="Fraser C.M."/>
            <person name="Kaneko T."/>
            <person name="Nakamura Y."/>
            <person name="Sato S."/>
            <person name="Kato T."/>
            <person name="Asamizu E."/>
            <person name="Sasamoto S."/>
            <person name="Kimura T."/>
            <person name="Idesawa K."/>
            <person name="Kawashima K."/>
            <person name="Kishida Y."/>
            <person name="Kiyokawa C."/>
            <person name="Kohara M."/>
            <person name="Matsumoto M."/>
            <person name="Matsuno A."/>
            <person name="Muraki A."/>
            <person name="Nakayama S."/>
            <person name="Nakazaki N."/>
            <person name="Shinpo S."/>
            <person name="Takeuchi C."/>
            <person name="Wada T."/>
            <person name="Watanabe A."/>
            <person name="Yamada M."/>
            <person name="Yasuda M."/>
            <person name="Tabata S."/>
        </authorList>
    </citation>
    <scope>NUCLEOTIDE SEQUENCE [LARGE SCALE GENOMIC DNA]</scope>
    <source>
        <strain>cv. Columbia</strain>
    </source>
</reference>
<reference key="2">
    <citation type="journal article" date="2017" name="Plant J.">
        <title>Araport11: a complete reannotation of the Arabidopsis thaliana reference genome.</title>
        <authorList>
            <person name="Cheng C.Y."/>
            <person name="Krishnakumar V."/>
            <person name="Chan A.P."/>
            <person name="Thibaud-Nissen F."/>
            <person name="Schobel S."/>
            <person name="Town C.D."/>
        </authorList>
    </citation>
    <scope>GENOME REANNOTATION</scope>
    <source>
        <strain>cv. Columbia</strain>
    </source>
</reference>
<reference key="3">
    <citation type="journal article" date="2003" name="Science">
        <title>Empirical analysis of transcriptional activity in the Arabidopsis genome.</title>
        <authorList>
            <person name="Yamada K."/>
            <person name="Lim J."/>
            <person name="Dale J.M."/>
            <person name="Chen H."/>
            <person name="Shinn P."/>
            <person name="Palm C.J."/>
            <person name="Southwick A.M."/>
            <person name="Wu H.C."/>
            <person name="Kim C.J."/>
            <person name="Nguyen M."/>
            <person name="Pham P.K."/>
            <person name="Cheuk R.F."/>
            <person name="Karlin-Newmann G."/>
            <person name="Liu S.X."/>
            <person name="Lam B."/>
            <person name="Sakano H."/>
            <person name="Wu T."/>
            <person name="Yu G."/>
            <person name="Miranda M."/>
            <person name="Quach H.L."/>
            <person name="Tripp M."/>
            <person name="Chang C.H."/>
            <person name="Lee J.M."/>
            <person name="Toriumi M.J."/>
            <person name="Chan M.M."/>
            <person name="Tang C.C."/>
            <person name="Onodera C.S."/>
            <person name="Deng J.M."/>
            <person name="Akiyama K."/>
            <person name="Ansari Y."/>
            <person name="Arakawa T."/>
            <person name="Banh J."/>
            <person name="Banno F."/>
            <person name="Bowser L."/>
            <person name="Brooks S.Y."/>
            <person name="Carninci P."/>
            <person name="Chao Q."/>
            <person name="Choy N."/>
            <person name="Enju A."/>
            <person name="Goldsmith A.D."/>
            <person name="Gurjal M."/>
            <person name="Hansen N.F."/>
            <person name="Hayashizaki Y."/>
            <person name="Johnson-Hopson C."/>
            <person name="Hsuan V.W."/>
            <person name="Iida K."/>
            <person name="Karnes M."/>
            <person name="Khan S."/>
            <person name="Koesema E."/>
            <person name="Ishida J."/>
            <person name="Jiang P.X."/>
            <person name="Jones T."/>
            <person name="Kawai J."/>
            <person name="Kamiya A."/>
            <person name="Meyers C."/>
            <person name="Nakajima M."/>
            <person name="Narusaka M."/>
            <person name="Seki M."/>
            <person name="Sakurai T."/>
            <person name="Satou M."/>
            <person name="Tamse R."/>
            <person name="Vaysberg M."/>
            <person name="Wallender E.K."/>
            <person name="Wong C."/>
            <person name="Yamamura Y."/>
            <person name="Yuan S."/>
            <person name="Shinozaki K."/>
            <person name="Davis R.W."/>
            <person name="Theologis A."/>
            <person name="Ecker J.R."/>
        </authorList>
    </citation>
    <scope>NUCLEOTIDE SEQUENCE [LARGE SCALE MRNA]</scope>
    <source>
        <strain>cv. Columbia</strain>
    </source>
</reference>
<reference key="4">
    <citation type="submission" date="2006-07" db="EMBL/GenBank/DDBJ databases">
        <title>Large-scale analysis of RIKEN Arabidopsis full-length (RAFL) cDNAs.</title>
        <authorList>
            <person name="Totoki Y."/>
            <person name="Seki M."/>
            <person name="Ishida J."/>
            <person name="Nakajima M."/>
            <person name="Enju A."/>
            <person name="Kamiya A."/>
            <person name="Narusaka M."/>
            <person name="Shin-i T."/>
            <person name="Nakagawa M."/>
            <person name="Sakamoto N."/>
            <person name="Oishi K."/>
            <person name="Kohara Y."/>
            <person name="Kobayashi M."/>
            <person name="Toyoda A."/>
            <person name="Sakaki Y."/>
            <person name="Sakurai T."/>
            <person name="Iida K."/>
            <person name="Akiyama K."/>
            <person name="Satou M."/>
            <person name="Toyoda T."/>
            <person name="Konagaya A."/>
            <person name="Carninci P."/>
            <person name="Kawai J."/>
            <person name="Hayashizaki Y."/>
            <person name="Shinozaki K."/>
        </authorList>
    </citation>
    <scope>NUCLEOTIDE SEQUENCE [LARGE SCALE MRNA] OF 409-602</scope>
    <source>
        <strain>cv. Columbia</strain>
    </source>
</reference>
<reference key="5">
    <citation type="journal article" date="2002" name="Plant Mol. Biol.">
        <title>Auxin-responsive gene expression: genes, promoters and regulatory factors.</title>
        <authorList>
            <person name="Hagen G."/>
            <person name="Guilfoyle T.J."/>
        </authorList>
    </citation>
    <scope>GENE FAMILY</scope>
    <scope>NOMENCLATURE</scope>
    <scope>FUNCTION</scope>
</reference>
<reference key="6">
    <citation type="journal article" date="2008" name="Trends Plant Sci.">
        <title>The plant B3 superfamily.</title>
        <authorList>
            <person name="Swaminathan K."/>
            <person name="Peterson K."/>
            <person name="Jack T."/>
        </authorList>
    </citation>
    <scope>GENE FAMILY</scope>
</reference>
<gene>
    <name type="primary">ARF18</name>
    <name type="ordered locus">At3g61830</name>
    <name type="ORF">F15G16.220</name>
</gene>
<organism>
    <name type="scientific">Arabidopsis thaliana</name>
    <name type="common">Mouse-ear cress</name>
    <dbReference type="NCBI Taxonomy" id="3702"/>
    <lineage>
        <taxon>Eukaryota</taxon>
        <taxon>Viridiplantae</taxon>
        <taxon>Streptophyta</taxon>
        <taxon>Embryophyta</taxon>
        <taxon>Tracheophyta</taxon>
        <taxon>Spermatophyta</taxon>
        <taxon>Magnoliopsida</taxon>
        <taxon>eudicotyledons</taxon>
        <taxon>Gunneridae</taxon>
        <taxon>Pentapetalae</taxon>
        <taxon>rosids</taxon>
        <taxon>malvids</taxon>
        <taxon>Brassicales</taxon>
        <taxon>Brassicaceae</taxon>
        <taxon>Camelineae</taxon>
        <taxon>Arabidopsis</taxon>
    </lineage>
</organism>
<evidence type="ECO:0000250" key="1"/>
<evidence type="ECO:0000255" key="2">
    <source>
        <dbReference type="PROSITE-ProRule" id="PRU00326"/>
    </source>
</evidence>
<evidence type="ECO:0000255" key="3">
    <source>
        <dbReference type="PROSITE-ProRule" id="PRU01081"/>
    </source>
</evidence>
<evidence type="ECO:0000256" key="4">
    <source>
        <dbReference type="SAM" id="MobiDB-lite"/>
    </source>
</evidence>
<evidence type="ECO:0000269" key="5">
    <source>
    </source>
</evidence>
<evidence type="ECO:0000305" key="6"/>
<sequence>MASVEGDDDFGSSSSRSYQDQLYTELWKVCAGPLVEVPRAQERVFYFPQGHMEQLVASTNQGINSEEIPVFDLPPKILCRVLDVTLKAEHETDEVYAQITLQPEEDQSEPTSLDPPIVGPTKQEFHSFVKILTASDTSTHGGFSVLRKHATECLPSLDMTQATPTQELVTRDLHGFEWRFKHIFRGQPRRHLLTTGWSTFVSSKRLVAGDAFVFLRGENGDLRVGVRRLARHQSTMPTSVISSQSMHLGVLATASHAVRTTTIFVVFYKPRISQFIVGVNKYMEAIKHGFSLGTRFRMRFEGEESPERIFTGTIVGSGDLSSQWPASKWRSLQVQWDEPTTVQRPDKVSPWEIEPFLATSPISTPAQQPQSKCKRSRPIEPSVKTPAPPSFLYSLPQSQDSINASLKLFQDPSLERISGGYSSNNSFKPETPPPPTNCSYRLFGFDLTSNSPAPIPQDKQPMDTCGAAKCQEPITPTSMSEQKKQQTSRSRTKVQMQGIAVGRAVDLTLLKSYDELIDELEEMFEIQGQLLARDKWIVVFTDDEGDMMLAGDDPWNEFCKMAKKIFIYSSDEVKKMTTKLKISSSLENEEYGNESFENRSRG</sequence>
<comment type="function">
    <text evidence="5">Auxin response factors (ARFs) are transcriptional factors that bind specifically to the DNA sequence 5'-TGTCTC-3' found in the auxin-responsive promoter elements (AuxREs). Could act as transcriptional activator or repressor. Formation of heterodimers with Aux/IAA proteins may alter their ability to modulate early auxin response genes expression.</text>
</comment>
<comment type="subunit">
    <text evidence="1">Homodimers and heterodimers.</text>
</comment>
<comment type="interaction">
    <interactant intactId="EBI-3946783">
        <id>Q9C5W9</id>
    </interactant>
    <interactant intactId="EBI-2324259">
        <id>Q8L7G0</id>
        <label>ARF1</label>
    </interactant>
    <organismsDiffer>false</organismsDiffer>
    <experiments>4</experiments>
</comment>
<comment type="interaction">
    <interactant intactId="EBI-3946783">
        <id>Q9C5W9</id>
    </interactant>
    <interactant intactId="EBI-3946783">
        <id>Q9C5W9</id>
        <label>ARF18</label>
    </interactant>
    <organismsDiffer>false</organismsDiffer>
    <experiments>8</experiments>
</comment>
<comment type="interaction">
    <interactant intactId="EBI-3946783">
        <id>Q9C5W9</id>
    </interactant>
    <interactant intactId="EBI-3946762">
        <id>Q9XED8</id>
        <label>ARF9</label>
    </interactant>
    <organismsDiffer>false</organismsDiffer>
    <experiments>4</experiments>
</comment>
<comment type="interaction">
    <interactant intactId="EBI-3946783">
        <id>Q9C5W9</id>
    </interactant>
    <interactant intactId="EBI-15192195">
        <id>B9DHT4</id>
        <label>ARIA</label>
    </interactant>
    <organismsDiffer>false</organismsDiffer>
    <experiments>3</experiments>
</comment>
<comment type="interaction">
    <interactant intactId="EBI-3946783">
        <id>Q9C5W9</id>
    </interactant>
    <interactant intactId="EBI-1546775">
        <id>P13114</id>
        <label>CHS</label>
    </interactant>
    <organismsDiffer>false</organismsDiffer>
    <experiments>3</experiments>
</comment>
<comment type="interaction">
    <interactant intactId="EBI-3946783">
        <id>Q9C5W9</id>
    </interactant>
    <interactant intactId="EBI-3946434">
        <id>Q38828</id>
        <label>IAA10</label>
    </interactant>
    <organismsDiffer>false</organismsDiffer>
    <experiments>8</experiments>
</comment>
<comment type="interaction">
    <interactant intactId="EBI-3946783">
        <id>Q9C5W9</id>
    </interactant>
    <interactant intactId="EBI-617608">
        <id>Q38830</id>
        <label>IAA12</label>
    </interactant>
    <organismsDiffer>false</organismsDiffer>
    <experiments>4</experiments>
</comment>
<comment type="interaction">
    <interactant intactId="EBI-3946783">
        <id>Q9C5W9</id>
    </interactant>
    <interactant intactId="EBI-1554143">
        <id>Q38831</id>
        <label>IAA13</label>
    </interactant>
    <organismsDiffer>false</organismsDiffer>
    <experiments>3</experiments>
</comment>
<comment type="interaction">
    <interactant intactId="EBI-3946783">
        <id>Q9C5W9</id>
    </interactant>
    <interactant intactId="EBI-632231">
        <id>O24407</id>
        <label>IAA16</label>
    </interactant>
    <organismsDiffer>false</organismsDiffer>
    <experiments>5</experiments>
</comment>
<comment type="interaction">
    <interactant intactId="EBI-3946783">
        <id>Q9C5W9</id>
    </interactant>
    <interactant intactId="EBI-632243">
        <id>P93830</id>
        <label>IAA17</label>
    </interactant>
    <organismsDiffer>false</organismsDiffer>
    <experiments>16</experiments>
</comment>
<comment type="interaction">
    <interactant intactId="EBI-3946783">
        <id>Q9C5W9</id>
    </interactant>
    <interactant intactId="EBI-2295525">
        <id>O24408</id>
        <label>IAA18</label>
    </interactant>
    <organismsDiffer>false</organismsDiffer>
    <experiments>8</experiments>
</comment>
<comment type="interaction">
    <interactant intactId="EBI-3946783">
        <id>Q9C5W9</id>
    </interactant>
    <interactant intactId="EBI-632257">
        <id>O24409</id>
        <label>IAA19</label>
    </interactant>
    <organismsDiffer>false</organismsDiffer>
    <experiments>6</experiments>
</comment>
<comment type="interaction">
    <interactant intactId="EBI-3946783">
        <id>Q9C5W9</id>
    </interactant>
    <interactant intactId="EBI-3947418">
        <id>Q8LAL2</id>
        <label>IAA26</label>
    </interactant>
    <organismsDiffer>false</organismsDiffer>
    <experiments>7</experiments>
</comment>
<comment type="interaction">
    <interactant intactId="EBI-3946783">
        <id>Q9C5W9</id>
    </interactant>
    <interactant intactId="EBI-3946677">
        <id>Q9ZSY8</id>
        <label>IAA27</label>
    </interactant>
    <organismsDiffer>false</organismsDiffer>
    <experiments>4</experiments>
</comment>
<comment type="interaction">
    <interactant intactId="EBI-3946783">
        <id>Q9C5W9</id>
    </interactant>
    <interactant intactId="EBI-3133404">
        <id>Q9XFM0</id>
        <label>IAA28</label>
    </interactant>
    <organismsDiffer>false</organismsDiffer>
    <experiments>11</experiments>
</comment>
<comment type="interaction">
    <interactant intactId="EBI-3946783">
        <id>Q9C5W9</id>
    </interactant>
    <interactant intactId="EBI-3946739">
        <id>Q9FKM7</id>
        <label>IAA33</label>
    </interactant>
    <organismsDiffer>false</organismsDiffer>
    <experiments>6</experiments>
</comment>
<comment type="interaction">
    <interactant intactId="EBI-3946783">
        <id>Q9C5W9</id>
    </interactant>
    <interactant intactId="EBI-3946459">
        <id>Q9C5X0</id>
        <label>IAA34</label>
    </interactant>
    <organismsDiffer>false</organismsDiffer>
    <experiments>4</experiments>
</comment>
<comment type="interaction">
    <interactant intactId="EBI-3946783">
        <id>Q9C5W9</id>
    </interactant>
    <interactant intactId="EBI-1554124">
        <id>Q38824</id>
        <label>IAA6</label>
    </interactant>
    <organismsDiffer>false</organismsDiffer>
    <experiments>3</experiments>
</comment>
<comment type="interaction">
    <interactant intactId="EBI-3946783">
        <id>Q9C5W9</id>
    </interactant>
    <interactant intactId="EBI-602959">
        <id>Q38825</id>
        <label>IAA7</label>
    </interactant>
    <organismsDiffer>false</organismsDiffer>
    <experiments>3</experiments>
</comment>
<comment type="interaction">
    <interactant intactId="EBI-3946783">
        <id>Q9C5W9</id>
    </interactant>
    <interactant intactId="EBI-15193683">
        <id>Q5CCK4</id>
        <label>VAL2</label>
    </interactant>
    <organismsDiffer>false</organismsDiffer>
    <experiments>8</experiments>
</comment>
<comment type="subcellular location">
    <subcellularLocation>
        <location>Nucleus</location>
    </subcellularLocation>
</comment>
<comment type="domain">
    <text>Interactions between auxin response factors (ARFs) and Aux/IAA proteins occur through their C-terminal dimerization domains III and IV.</text>
</comment>
<comment type="similarity">
    <text evidence="6">Belongs to the ARF family.</text>
</comment>
<comment type="sequence caution" evidence="6">
    <conflict type="erroneous gene model prediction">
        <sequence resource="EMBL-CDS" id="CAB71113"/>
    </conflict>
</comment>
<proteinExistence type="evidence at protein level"/>
<accession>Q9C5W9</accession>
<accession>Q0WM85</accession>
<accession>Q9M355</accession>
<feature type="chain" id="PRO_0000111522" description="Auxin response factor 18">
    <location>
        <begin position="1"/>
        <end position="602"/>
    </location>
</feature>
<feature type="domain" description="PB1" evidence="3">
    <location>
        <begin position="489"/>
        <end position="581"/>
    </location>
</feature>
<feature type="DNA-binding region" description="TF-B3" evidence="2">
    <location>
        <begin position="128"/>
        <end position="230"/>
    </location>
</feature>
<feature type="region of interest" description="Disordered" evidence="4">
    <location>
        <begin position="359"/>
        <end position="396"/>
    </location>
</feature>
<feature type="compositionally biased region" description="Polar residues" evidence="4">
    <location>
        <begin position="360"/>
        <end position="371"/>
    </location>
</feature>